<accession>Q8NXW5</accession>
<dbReference type="EC" id="1.3.98.5" evidence="1"/>
<dbReference type="EMBL" id="BA000033">
    <property type="protein sequence ID" value="BAB94407.1"/>
    <property type="molecule type" value="Genomic_DNA"/>
</dbReference>
<dbReference type="SMR" id="Q8NXW5"/>
<dbReference type="KEGG" id="sam:MW0542"/>
<dbReference type="HOGENOM" id="CLU_063226_1_0_9"/>
<dbReference type="UniPathway" id="UPA00252"/>
<dbReference type="GO" id="GO:0020037">
    <property type="term" value="F:heme binding"/>
    <property type="evidence" value="ECO:0007669"/>
    <property type="project" value="InterPro"/>
</dbReference>
<dbReference type="GO" id="GO:0046872">
    <property type="term" value="F:metal ion binding"/>
    <property type="evidence" value="ECO:0007669"/>
    <property type="project" value="UniProtKB-KW"/>
</dbReference>
<dbReference type="GO" id="GO:0016634">
    <property type="term" value="F:oxidoreductase activity, acting on the CH-CH group of donors, oxygen as acceptor"/>
    <property type="evidence" value="ECO:0007669"/>
    <property type="project" value="UniProtKB-UniRule"/>
</dbReference>
<dbReference type="GO" id="GO:0004601">
    <property type="term" value="F:peroxidase activity"/>
    <property type="evidence" value="ECO:0007669"/>
    <property type="project" value="InterPro"/>
</dbReference>
<dbReference type="GO" id="GO:0006785">
    <property type="term" value="P:heme B biosynthetic process"/>
    <property type="evidence" value="ECO:0007669"/>
    <property type="project" value="UniProtKB-UniRule"/>
</dbReference>
<dbReference type="Gene3D" id="3.30.70.1030">
    <property type="entry name" value="Apc35880, domain 1"/>
    <property type="match status" value="2"/>
</dbReference>
<dbReference type="HAMAP" id="MF_01442">
    <property type="entry name" value="Coproheme_decarbox_1"/>
    <property type="match status" value="1"/>
</dbReference>
<dbReference type="InterPro" id="IPR031332">
    <property type="entry name" value="CHDC"/>
</dbReference>
<dbReference type="InterPro" id="IPR010644">
    <property type="entry name" value="ChdC/CLD"/>
</dbReference>
<dbReference type="InterPro" id="IPR011008">
    <property type="entry name" value="Dimeric_a/b-barrel"/>
</dbReference>
<dbReference type="NCBIfam" id="NF008913">
    <property type="entry name" value="PRK12276.1"/>
    <property type="match status" value="1"/>
</dbReference>
<dbReference type="PANTHER" id="PTHR36843:SF1">
    <property type="entry name" value="COPROHEME DECARBOXYLASE"/>
    <property type="match status" value="1"/>
</dbReference>
<dbReference type="PANTHER" id="PTHR36843">
    <property type="entry name" value="HEME-DEPENDENT PEROXIDASE YWFI-RELATED"/>
    <property type="match status" value="1"/>
</dbReference>
<dbReference type="Pfam" id="PF06778">
    <property type="entry name" value="Chlor_dismutase"/>
    <property type="match status" value="1"/>
</dbReference>
<dbReference type="SUPFAM" id="SSF54909">
    <property type="entry name" value="Dimeric alpha+beta barrel"/>
    <property type="match status" value="1"/>
</dbReference>
<name>CHDC_STAAW</name>
<feature type="chain" id="PRO_0000294053" description="Coproheme decarboxylase">
    <location>
        <begin position="1"/>
        <end position="250"/>
    </location>
</feature>
<feature type="active site" evidence="1">
    <location>
        <position position="145"/>
    </location>
</feature>
<feature type="binding site" evidence="1">
    <location>
        <position position="131"/>
    </location>
    <ligand>
        <name>Fe-coproporphyrin III</name>
        <dbReference type="ChEBI" id="CHEBI:68438"/>
    </ligand>
</feature>
<feature type="binding site" evidence="1">
    <location>
        <begin position="145"/>
        <end position="149"/>
    </location>
    <ligand>
        <name>Fe-coproporphyrin III</name>
        <dbReference type="ChEBI" id="CHEBI:68438"/>
    </ligand>
</feature>
<feature type="binding site" description="axial binding residue" evidence="1">
    <location>
        <position position="172"/>
    </location>
    <ligand>
        <name>Fe-coproporphyrin III</name>
        <dbReference type="ChEBI" id="CHEBI:68438"/>
    </ligand>
    <ligandPart>
        <name>Fe</name>
        <dbReference type="ChEBI" id="CHEBI:18248"/>
    </ligandPart>
</feature>
<feature type="binding site" evidence="1">
    <location>
        <position position="185"/>
    </location>
    <ligand>
        <name>Fe-coproporphyrin III</name>
        <dbReference type="ChEBI" id="CHEBI:68438"/>
    </ligand>
</feature>
<evidence type="ECO:0000255" key="1">
    <source>
        <dbReference type="HAMAP-Rule" id="MF_01442"/>
    </source>
</evidence>
<protein>
    <recommendedName>
        <fullName evidence="1">Coproheme decarboxylase</fullName>
        <ecNumber evidence="1">1.3.98.5</ecNumber>
    </recommendedName>
    <alternativeName>
        <fullName evidence="1">Coproheme III oxidative decarboxylase</fullName>
    </alternativeName>
    <alternativeName>
        <fullName evidence="1">Hydrogen peroxide-dependent heme synthase</fullName>
    </alternativeName>
</protein>
<gene>
    <name evidence="1" type="primary">chdC</name>
    <name type="ordered locus">MW0542</name>
</gene>
<organism>
    <name type="scientific">Staphylococcus aureus (strain MW2)</name>
    <dbReference type="NCBI Taxonomy" id="196620"/>
    <lineage>
        <taxon>Bacteria</taxon>
        <taxon>Bacillati</taxon>
        <taxon>Bacillota</taxon>
        <taxon>Bacilli</taxon>
        <taxon>Bacillales</taxon>
        <taxon>Staphylococcaceae</taxon>
        <taxon>Staphylococcus</taxon>
    </lineage>
</organism>
<comment type="function">
    <text evidence="1">Involved in coproporphyrin-dependent heme b biosynthesis. Catalyzes the decarboxylation of Fe-coproporphyrin III (coproheme) to heme b (protoheme IX), the last step of the pathway. The reaction occurs in a stepwise manner with a three-propionate intermediate.</text>
</comment>
<comment type="catalytic activity">
    <reaction evidence="1">
        <text>Fe-coproporphyrin III + 2 H2O2 + 2 H(+) = heme b + 2 CO2 + 4 H2O</text>
        <dbReference type="Rhea" id="RHEA:56516"/>
        <dbReference type="ChEBI" id="CHEBI:15377"/>
        <dbReference type="ChEBI" id="CHEBI:15378"/>
        <dbReference type="ChEBI" id="CHEBI:16240"/>
        <dbReference type="ChEBI" id="CHEBI:16526"/>
        <dbReference type="ChEBI" id="CHEBI:60344"/>
        <dbReference type="ChEBI" id="CHEBI:68438"/>
        <dbReference type="EC" id="1.3.98.5"/>
    </reaction>
    <physiologicalReaction direction="left-to-right" evidence="1">
        <dbReference type="Rhea" id="RHEA:56517"/>
    </physiologicalReaction>
</comment>
<comment type="catalytic activity">
    <reaction evidence="1">
        <text>Fe-coproporphyrin III + H2O2 + H(+) = harderoheme III + CO2 + 2 H2O</text>
        <dbReference type="Rhea" id="RHEA:57940"/>
        <dbReference type="ChEBI" id="CHEBI:15377"/>
        <dbReference type="ChEBI" id="CHEBI:15378"/>
        <dbReference type="ChEBI" id="CHEBI:16240"/>
        <dbReference type="ChEBI" id="CHEBI:16526"/>
        <dbReference type="ChEBI" id="CHEBI:68438"/>
        <dbReference type="ChEBI" id="CHEBI:142463"/>
    </reaction>
    <physiologicalReaction direction="left-to-right" evidence="1">
        <dbReference type="Rhea" id="RHEA:57941"/>
    </physiologicalReaction>
</comment>
<comment type="catalytic activity">
    <reaction evidence="1">
        <text>harderoheme III + H2O2 + H(+) = heme b + CO2 + 2 H2O</text>
        <dbReference type="Rhea" id="RHEA:57944"/>
        <dbReference type="ChEBI" id="CHEBI:15377"/>
        <dbReference type="ChEBI" id="CHEBI:15378"/>
        <dbReference type="ChEBI" id="CHEBI:16240"/>
        <dbReference type="ChEBI" id="CHEBI:16526"/>
        <dbReference type="ChEBI" id="CHEBI:60344"/>
        <dbReference type="ChEBI" id="CHEBI:142463"/>
    </reaction>
    <physiologicalReaction direction="left-to-right" evidence="1">
        <dbReference type="Rhea" id="RHEA:57945"/>
    </physiologicalReaction>
</comment>
<comment type="cofactor">
    <cofactor evidence="1">
        <name>Fe-coproporphyrin III</name>
        <dbReference type="ChEBI" id="CHEBI:68438"/>
    </cofactor>
    <text evidence="1">Fe-coproporphyrin III acts both as a substrate and a redox cofactor.</text>
</comment>
<comment type="pathway">
    <text evidence="1">Porphyrin-containing compound metabolism; protoheme biosynthesis.</text>
</comment>
<comment type="similarity">
    <text evidence="1">Belongs to the ChdC family. Type 1 subfamily.</text>
</comment>
<keyword id="KW-0349">Heme</keyword>
<keyword id="KW-0350">Heme biosynthesis</keyword>
<keyword id="KW-0408">Iron</keyword>
<keyword id="KW-0479">Metal-binding</keyword>
<keyword id="KW-0560">Oxidoreductase</keyword>
<proteinExistence type="inferred from homology"/>
<sequence length="250" mass="29390">MSQAAETLDGWYSLHLFYAVDWASLRLVPKDERDALVTEFQSFLENTATVRSSKSGDQAIYNITGQKADLLLWFLRPEMKSLNHIENEFNKLRIADFLIPTYSYVSVIELSNYLAGKSDEDPYENPHIKARLYPELPHSDYICFYPMNKRRNETYNWYMLTMEERQKLMYDHGMIGRKYAGKIKQFITGSVGFDDFEWGVTLFSDDVLQFKKIVYEMRFDETTARYGEFGSFFVGHLINTNEFDQFFAIS</sequence>
<reference key="1">
    <citation type="journal article" date="2002" name="Lancet">
        <title>Genome and virulence determinants of high virulence community-acquired MRSA.</title>
        <authorList>
            <person name="Baba T."/>
            <person name="Takeuchi F."/>
            <person name="Kuroda M."/>
            <person name="Yuzawa H."/>
            <person name="Aoki K."/>
            <person name="Oguchi A."/>
            <person name="Nagai Y."/>
            <person name="Iwama N."/>
            <person name="Asano K."/>
            <person name="Naimi T."/>
            <person name="Kuroda H."/>
            <person name="Cui L."/>
            <person name="Yamamoto K."/>
            <person name="Hiramatsu K."/>
        </authorList>
    </citation>
    <scope>NUCLEOTIDE SEQUENCE [LARGE SCALE GENOMIC DNA]</scope>
    <source>
        <strain>MW2</strain>
    </source>
</reference>